<dbReference type="EMBL" id="AC004382">
    <property type="status" value="NOT_ANNOTATED_CDS"/>
    <property type="molecule type" value="Genomic_DNA"/>
</dbReference>
<dbReference type="EMBL" id="BC004307">
    <property type="protein sequence ID" value="AAH04307.1"/>
    <property type="molecule type" value="mRNA"/>
</dbReference>
<dbReference type="EMBL" id="BC008285">
    <property type="protein sequence ID" value="AAH08285.1"/>
    <property type="molecule type" value="mRNA"/>
</dbReference>
<dbReference type="EMBL" id="BC009941">
    <property type="protein sequence ID" value="AAH09941.1"/>
    <property type="molecule type" value="mRNA"/>
</dbReference>
<dbReference type="CCDS" id="CCDS10784.1"/>
<dbReference type="RefSeq" id="NP_149989.2">
    <property type="nucleotide sequence ID" value="NM_033212.4"/>
</dbReference>
<dbReference type="RefSeq" id="XP_011521771.1">
    <property type="nucleotide sequence ID" value="XM_011523469.3"/>
</dbReference>
<dbReference type="SMR" id="Q96A19"/>
<dbReference type="BioGRID" id="124987">
    <property type="interactions" value="62"/>
</dbReference>
<dbReference type="FunCoup" id="Q96A19">
    <property type="interactions" value="503"/>
</dbReference>
<dbReference type="IntAct" id="Q96A19">
    <property type="interactions" value="55"/>
</dbReference>
<dbReference type="STRING" id="9606.ENSP00000258214"/>
<dbReference type="GlyGen" id="Q96A19">
    <property type="glycosylation" value="3 sites, 1 O-linked glycan (1 site)"/>
</dbReference>
<dbReference type="iPTMnet" id="Q96A19"/>
<dbReference type="PhosphoSitePlus" id="Q96A19"/>
<dbReference type="BioMuta" id="CCDC102A"/>
<dbReference type="DMDM" id="296434412"/>
<dbReference type="jPOST" id="Q96A19"/>
<dbReference type="MassIVE" id="Q96A19"/>
<dbReference type="PaxDb" id="9606-ENSP00000258214"/>
<dbReference type="PeptideAtlas" id="Q96A19"/>
<dbReference type="ProteomicsDB" id="75892"/>
<dbReference type="Pumba" id="Q96A19"/>
<dbReference type="Antibodypedia" id="48917">
    <property type="antibodies" value="106 antibodies from 24 providers"/>
</dbReference>
<dbReference type="DNASU" id="92922"/>
<dbReference type="Ensembl" id="ENST00000258214.3">
    <property type="protein sequence ID" value="ENSP00000258214.2"/>
    <property type="gene ID" value="ENSG00000135736.6"/>
</dbReference>
<dbReference type="GeneID" id="92922"/>
<dbReference type="KEGG" id="hsa:92922"/>
<dbReference type="MANE-Select" id="ENST00000258214.3">
    <property type="protein sequence ID" value="ENSP00000258214.2"/>
    <property type="RefSeq nucleotide sequence ID" value="NM_033212.4"/>
    <property type="RefSeq protein sequence ID" value="NP_149989.2"/>
</dbReference>
<dbReference type="UCSC" id="uc002elw.4">
    <property type="organism name" value="human"/>
</dbReference>
<dbReference type="AGR" id="HGNC:28097"/>
<dbReference type="CTD" id="92922"/>
<dbReference type="DisGeNET" id="92922"/>
<dbReference type="GeneCards" id="CCDC102A"/>
<dbReference type="HGNC" id="HGNC:28097">
    <property type="gene designation" value="CCDC102A"/>
</dbReference>
<dbReference type="HPA" id="ENSG00000135736">
    <property type="expression patterns" value="Low tissue specificity"/>
</dbReference>
<dbReference type="neXtProt" id="NX_Q96A19"/>
<dbReference type="OpenTargets" id="ENSG00000135736"/>
<dbReference type="PharmGKB" id="PA144596469"/>
<dbReference type="VEuPathDB" id="HostDB:ENSG00000135736"/>
<dbReference type="eggNOG" id="ENOG502QSJ6">
    <property type="taxonomic scope" value="Eukaryota"/>
</dbReference>
<dbReference type="GeneTree" id="ENSGT00730000110960"/>
<dbReference type="HOGENOM" id="CLU_033486_1_0_1"/>
<dbReference type="InParanoid" id="Q96A19"/>
<dbReference type="OMA" id="EELEGCW"/>
<dbReference type="OrthoDB" id="5984396at2759"/>
<dbReference type="PAN-GO" id="Q96A19">
    <property type="GO annotations" value="0 GO annotations based on evolutionary models"/>
</dbReference>
<dbReference type="PhylomeDB" id="Q96A19"/>
<dbReference type="TreeFam" id="TF320856"/>
<dbReference type="PathwayCommons" id="Q96A19"/>
<dbReference type="SignaLink" id="Q96A19"/>
<dbReference type="BioGRID-ORCS" id="92922">
    <property type="hits" value="21 hits in 1157 CRISPR screens"/>
</dbReference>
<dbReference type="ChiTaRS" id="CCDC102A">
    <property type="organism name" value="human"/>
</dbReference>
<dbReference type="GenomeRNAi" id="92922"/>
<dbReference type="Pharos" id="Q96A19">
    <property type="development level" value="Tdark"/>
</dbReference>
<dbReference type="PRO" id="PR:Q96A19"/>
<dbReference type="Proteomes" id="UP000005640">
    <property type="component" value="Chromosome 16"/>
</dbReference>
<dbReference type="RNAct" id="Q96A19">
    <property type="molecule type" value="protein"/>
</dbReference>
<dbReference type="Bgee" id="ENSG00000135736">
    <property type="expression patterns" value="Expressed in right coronary artery and 99 other cell types or tissues"/>
</dbReference>
<dbReference type="GO" id="GO:0016459">
    <property type="term" value="C:myosin complex"/>
    <property type="evidence" value="ECO:0007669"/>
    <property type="project" value="InterPro"/>
</dbReference>
<dbReference type="Gene3D" id="1.20.5.340">
    <property type="match status" value="1"/>
</dbReference>
<dbReference type="Gene3D" id="6.10.250.2420">
    <property type="match status" value="1"/>
</dbReference>
<dbReference type="InterPro" id="IPR002928">
    <property type="entry name" value="Myosin_tail"/>
</dbReference>
<dbReference type="PANTHER" id="PTHR46292">
    <property type="entry name" value="COILED-COIL DOMAIN-CONTAINING PROTEIN 102A"/>
    <property type="match status" value="1"/>
</dbReference>
<dbReference type="PANTHER" id="PTHR46292:SF3">
    <property type="entry name" value="COILED-COIL DOMAIN-CONTAINING PROTEIN 102A"/>
    <property type="match status" value="1"/>
</dbReference>
<dbReference type="Pfam" id="PF01576">
    <property type="entry name" value="Myosin_tail_1"/>
    <property type="match status" value="1"/>
</dbReference>
<dbReference type="SUPFAM" id="SSF90257">
    <property type="entry name" value="Myosin rod fragments"/>
    <property type="match status" value="1"/>
</dbReference>
<sequence length="550" mass="62596">MSHGPSPRLAESPQLSKGSLLTILGSPSPERMGPADSLPPTPPSGTPSPGPPPALPLPPAPALLADGDWESREELRLRELEEARARAAQMEKTMRRWSDCTANWREKWSKVRAERNRAREEVRQLRQRLDALTKELAGARRERQEAQGECEARGRELARLRGARGVADQTRDGPEPEAEREPVRDVGSERPPGSQELELVESLLKSMPEESEDCWEARSLGAGGPRGSSGRQERSRLPWEDTAATEEEASKLTALRLRLDESQKVLLKEREDKLALSRNIEKLEGELSQWKIKYEELSKTKQEMLKQLSILKEAHQDELGRMSEDLEDELGARSSMDRKMAELRGEMERLQAENAAEWGRRERLETEKLGLERENKKLRAQVGDLEEALARRRRQTASALDCDLRASQAALFEKNKELADLKHVHGKLKKQFQEKVAELAHANRRVEQHEAEVKKLRLRVEELKKELAQAEDELDEAHNQARKLQRSLDEQTEQSENLQVQLEHLQSRLRRQQQNAPLFGKIRSARFGTEEAEDGTSDLDEDEDLQIQVA</sequence>
<comment type="interaction">
    <interactant intactId="EBI-11098815">
        <id>Q96A19</id>
    </interactant>
    <interactant intactId="EBI-2878119">
        <id>P83111</id>
        <label>LACTB</label>
    </interactant>
    <organismsDiffer>false</organismsDiffer>
    <experiments>2</experiments>
</comment>
<organism>
    <name type="scientific">Homo sapiens</name>
    <name type="common">Human</name>
    <dbReference type="NCBI Taxonomy" id="9606"/>
    <lineage>
        <taxon>Eukaryota</taxon>
        <taxon>Metazoa</taxon>
        <taxon>Chordata</taxon>
        <taxon>Craniata</taxon>
        <taxon>Vertebrata</taxon>
        <taxon>Euteleostomi</taxon>
        <taxon>Mammalia</taxon>
        <taxon>Eutheria</taxon>
        <taxon>Euarchontoglires</taxon>
        <taxon>Primates</taxon>
        <taxon>Haplorrhini</taxon>
        <taxon>Catarrhini</taxon>
        <taxon>Hominidae</taxon>
        <taxon>Homo</taxon>
    </lineage>
</organism>
<reference key="1">
    <citation type="journal article" date="2004" name="Nature">
        <title>The sequence and analysis of duplication-rich human chromosome 16.</title>
        <authorList>
            <person name="Martin J."/>
            <person name="Han C."/>
            <person name="Gordon L.A."/>
            <person name="Terry A."/>
            <person name="Prabhakar S."/>
            <person name="She X."/>
            <person name="Xie G."/>
            <person name="Hellsten U."/>
            <person name="Chan Y.M."/>
            <person name="Altherr M."/>
            <person name="Couronne O."/>
            <person name="Aerts A."/>
            <person name="Bajorek E."/>
            <person name="Black S."/>
            <person name="Blumer H."/>
            <person name="Branscomb E."/>
            <person name="Brown N.C."/>
            <person name="Bruno W.J."/>
            <person name="Buckingham J.M."/>
            <person name="Callen D.F."/>
            <person name="Campbell C.S."/>
            <person name="Campbell M.L."/>
            <person name="Campbell E.W."/>
            <person name="Caoile C."/>
            <person name="Challacombe J.F."/>
            <person name="Chasteen L.A."/>
            <person name="Chertkov O."/>
            <person name="Chi H.C."/>
            <person name="Christensen M."/>
            <person name="Clark L.M."/>
            <person name="Cohn J.D."/>
            <person name="Denys M."/>
            <person name="Detter J.C."/>
            <person name="Dickson M."/>
            <person name="Dimitrijevic-Bussod M."/>
            <person name="Escobar J."/>
            <person name="Fawcett J.J."/>
            <person name="Flowers D."/>
            <person name="Fotopulos D."/>
            <person name="Glavina T."/>
            <person name="Gomez M."/>
            <person name="Gonzales E."/>
            <person name="Goodstein D."/>
            <person name="Goodwin L.A."/>
            <person name="Grady D.L."/>
            <person name="Grigoriev I."/>
            <person name="Groza M."/>
            <person name="Hammon N."/>
            <person name="Hawkins T."/>
            <person name="Haydu L."/>
            <person name="Hildebrand C.E."/>
            <person name="Huang W."/>
            <person name="Israni S."/>
            <person name="Jett J."/>
            <person name="Jewett P.B."/>
            <person name="Kadner K."/>
            <person name="Kimball H."/>
            <person name="Kobayashi A."/>
            <person name="Krawczyk M.-C."/>
            <person name="Leyba T."/>
            <person name="Longmire J.L."/>
            <person name="Lopez F."/>
            <person name="Lou Y."/>
            <person name="Lowry S."/>
            <person name="Ludeman T."/>
            <person name="Manohar C.F."/>
            <person name="Mark G.A."/>
            <person name="McMurray K.L."/>
            <person name="Meincke L.J."/>
            <person name="Morgan J."/>
            <person name="Moyzis R.K."/>
            <person name="Mundt M.O."/>
            <person name="Munk A.C."/>
            <person name="Nandkeshwar R.D."/>
            <person name="Pitluck S."/>
            <person name="Pollard M."/>
            <person name="Predki P."/>
            <person name="Parson-Quintana B."/>
            <person name="Ramirez L."/>
            <person name="Rash S."/>
            <person name="Retterer J."/>
            <person name="Ricke D.O."/>
            <person name="Robinson D.L."/>
            <person name="Rodriguez A."/>
            <person name="Salamov A."/>
            <person name="Saunders E.H."/>
            <person name="Scott D."/>
            <person name="Shough T."/>
            <person name="Stallings R.L."/>
            <person name="Stalvey M."/>
            <person name="Sutherland R.D."/>
            <person name="Tapia R."/>
            <person name="Tesmer J.G."/>
            <person name="Thayer N."/>
            <person name="Thompson L.S."/>
            <person name="Tice H."/>
            <person name="Torney D.C."/>
            <person name="Tran-Gyamfi M."/>
            <person name="Tsai M."/>
            <person name="Ulanovsky L.E."/>
            <person name="Ustaszewska A."/>
            <person name="Vo N."/>
            <person name="White P.S."/>
            <person name="Williams A.L."/>
            <person name="Wills P.L."/>
            <person name="Wu J.-R."/>
            <person name="Wu K."/>
            <person name="Yang J."/>
            <person name="DeJong P."/>
            <person name="Bruce D."/>
            <person name="Doggett N.A."/>
            <person name="Deaven L."/>
            <person name="Schmutz J."/>
            <person name="Grimwood J."/>
            <person name="Richardson P."/>
            <person name="Rokhsar D.S."/>
            <person name="Eichler E.E."/>
            <person name="Gilna P."/>
            <person name="Lucas S.M."/>
            <person name="Myers R.M."/>
            <person name="Rubin E.M."/>
            <person name="Pennacchio L.A."/>
        </authorList>
    </citation>
    <scope>NUCLEOTIDE SEQUENCE [LARGE SCALE GENOMIC DNA]</scope>
</reference>
<reference key="2">
    <citation type="journal article" date="2004" name="Genome Res.">
        <title>The status, quality, and expansion of the NIH full-length cDNA project: the Mammalian Gene Collection (MGC).</title>
        <authorList>
            <consortium name="The MGC Project Team"/>
        </authorList>
    </citation>
    <scope>NUCLEOTIDE SEQUENCE [LARGE SCALE MRNA]</scope>
    <source>
        <tissue>Brain</tissue>
        <tissue>Placenta</tissue>
        <tissue>Uterus</tissue>
    </source>
</reference>
<reference key="3">
    <citation type="journal article" date="2008" name="Proc. Natl. Acad. Sci. U.S.A.">
        <title>A quantitative atlas of mitotic phosphorylation.</title>
        <authorList>
            <person name="Dephoure N."/>
            <person name="Zhou C."/>
            <person name="Villen J."/>
            <person name="Beausoleil S.A."/>
            <person name="Bakalarski C.E."/>
            <person name="Elledge S.J."/>
            <person name="Gygi S.P."/>
        </authorList>
    </citation>
    <scope>PHOSPHORYLATION [LARGE SCALE ANALYSIS] AT SER-26 AND SER-28</scope>
    <scope>IDENTIFICATION BY MASS SPECTROMETRY [LARGE SCALE ANALYSIS]</scope>
    <source>
        <tissue>Cervix carcinoma</tissue>
    </source>
</reference>
<reference key="4">
    <citation type="journal article" date="2010" name="Sci. Signal.">
        <title>Quantitative phosphoproteomics reveals widespread full phosphorylation site occupancy during mitosis.</title>
        <authorList>
            <person name="Olsen J.V."/>
            <person name="Vermeulen M."/>
            <person name="Santamaria A."/>
            <person name="Kumar C."/>
            <person name="Miller M.L."/>
            <person name="Jensen L.J."/>
            <person name="Gnad F."/>
            <person name="Cox J."/>
            <person name="Jensen T.S."/>
            <person name="Nigg E.A."/>
            <person name="Brunak S."/>
            <person name="Mann M."/>
        </authorList>
    </citation>
    <scope>PHOSPHORYLATION [LARGE SCALE ANALYSIS] AT SER-26 AND SER-28</scope>
    <scope>IDENTIFICATION BY MASS SPECTROMETRY [LARGE SCALE ANALYSIS]</scope>
    <source>
        <tissue>Cervix carcinoma</tissue>
    </source>
</reference>
<reference key="5">
    <citation type="journal article" date="2013" name="J. Proteome Res.">
        <title>Toward a comprehensive characterization of a human cancer cell phosphoproteome.</title>
        <authorList>
            <person name="Zhou H."/>
            <person name="Di Palma S."/>
            <person name="Preisinger C."/>
            <person name="Peng M."/>
            <person name="Polat A.N."/>
            <person name="Heck A.J."/>
            <person name="Mohammed S."/>
        </authorList>
    </citation>
    <scope>PHOSPHORYLATION [LARGE SCALE ANALYSIS] AT SER-12 AND SER-28</scope>
    <scope>IDENTIFICATION BY MASS SPECTROMETRY [LARGE SCALE ANALYSIS]</scope>
    <source>
        <tissue>Cervix carcinoma</tissue>
        <tissue>Erythroleukemia</tissue>
    </source>
</reference>
<reference key="6">
    <citation type="journal article" date="2014" name="J. Proteomics">
        <title>An enzyme assisted RP-RPLC approach for in-depth analysis of human liver phosphoproteome.</title>
        <authorList>
            <person name="Bian Y."/>
            <person name="Song C."/>
            <person name="Cheng K."/>
            <person name="Dong M."/>
            <person name="Wang F."/>
            <person name="Huang J."/>
            <person name="Sun D."/>
            <person name="Wang L."/>
            <person name="Ye M."/>
            <person name="Zou H."/>
        </authorList>
    </citation>
    <scope>PHOSPHORYLATION [LARGE SCALE ANALYSIS] AT SER-537</scope>
    <scope>IDENTIFICATION BY MASS SPECTROMETRY [LARGE SCALE ANALYSIS]</scope>
    <source>
        <tissue>Liver</tissue>
    </source>
</reference>
<evidence type="ECO:0000255" key="1"/>
<evidence type="ECO:0000256" key="2">
    <source>
        <dbReference type="SAM" id="MobiDB-lite"/>
    </source>
</evidence>
<evidence type="ECO:0000305" key="3"/>
<evidence type="ECO:0007744" key="4">
    <source>
    </source>
</evidence>
<evidence type="ECO:0007744" key="5">
    <source>
    </source>
</evidence>
<evidence type="ECO:0007744" key="6">
    <source>
    </source>
</evidence>
<evidence type="ECO:0007744" key="7">
    <source>
    </source>
</evidence>
<gene>
    <name type="primary">CCDC102A</name>
</gene>
<proteinExistence type="evidence at protein level"/>
<protein>
    <recommendedName>
        <fullName>Coiled-coil domain-containing protein 102A</fullName>
    </recommendedName>
</protein>
<name>C102A_HUMAN</name>
<keyword id="KW-0175">Coiled coil</keyword>
<keyword id="KW-0597">Phosphoprotein</keyword>
<keyword id="KW-1267">Proteomics identification</keyword>
<keyword id="KW-1185">Reference proteome</keyword>
<accession>Q96A19</accession>
<accession>Q9BT74</accession>
<feature type="chain" id="PRO_0000274400" description="Coiled-coil domain-containing protein 102A">
    <location>
        <begin position="1"/>
        <end position="550"/>
    </location>
</feature>
<feature type="region of interest" description="Disordered" evidence="2">
    <location>
        <begin position="1"/>
        <end position="69"/>
    </location>
</feature>
<feature type="region of interest" description="Disordered" evidence="2">
    <location>
        <begin position="138"/>
        <end position="247"/>
    </location>
</feature>
<feature type="region of interest" description="Disordered" evidence="2">
    <location>
        <begin position="472"/>
        <end position="497"/>
    </location>
</feature>
<feature type="region of interest" description="Disordered" evidence="2">
    <location>
        <begin position="509"/>
        <end position="550"/>
    </location>
</feature>
<feature type="coiled-coil region" evidence="1">
    <location>
        <begin position="72"/>
        <end position="161"/>
    </location>
</feature>
<feature type="coiled-coil region" evidence="1">
    <location>
        <begin position="263"/>
        <end position="396"/>
    </location>
</feature>
<feature type="coiled-coil region" evidence="1">
    <location>
        <begin position="427"/>
        <end position="518"/>
    </location>
</feature>
<feature type="compositionally biased region" description="Pro residues" evidence="2">
    <location>
        <begin position="37"/>
        <end position="61"/>
    </location>
</feature>
<feature type="compositionally biased region" description="Basic and acidic residues" evidence="2">
    <location>
        <begin position="138"/>
        <end position="159"/>
    </location>
</feature>
<feature type="compositionally biased region" description="Basic and acidic residues" evidence="2">
    <location>
        <begin position="169"/>
        <end position="188"/>
    </location>
</feature>
<feature type="compositionally biased region" description="Acidic residues" evidence="2">
    <location>
        <begin position="530"/>
        <end position="550"/>
    </location>
</feature>
<feature type="modified residue" description="Phosphoserine" evidence="6">
    <location>
        <position position="12"/>
    </location>
</feature>
<feature type="modified residue" description="Phosphoserine" evidence="4 5">
    <location>
        <position position="26"/>
    </location>
</feature>
<feature type="modified residue" description="Phosphoserine" evidence="4 5 6">
    <location>
        <position position="28"/>
    </location>
</feature>
<feature type="modified residue" description="Phosphoserine" evidence="7">
    <location>
        <position position="537"/>
    </location>
</feature>
<feature type="sequence conflict" description="In Ref. 2; AAH08285/AAH09941." evidence="3" ref="2">
    <original>R</original>
    <variation>W</variation>
    <location>
        <position position="96"/>
    </location>
</feature>